<evidence type="ECO:0000250" key="1">
    <source>
        <dbReference type="UniProtKB" id="P76403"/>
    </source>
</evidence>
<evidence type="ECO:0000255" key="2"/>
<evidence type="ECO:0000305" key="3"/>
<protein>
    <recommendedName>
        <fullName evidence="1">tRNA hydroxylation protein P</fullName>
        <ecNumber evidence="3">3.4.-.-</ecNumber>
    </recommendedName>
</protein>
<proteinExistence type="inferred from homology"/>
<keyword id="KW-0378">Hydrolase</keyword>
<keyword id="KW-0645">Protease</keyword>
<keyword id="KW-1185">Reference proteome</keyword>
<keyword id="KW-0732">Signal</keyword>
<keyword id="KW-0819">tRNA processing</keyword>
<reference key="1">
    <citation type="journal article" date="1997" name="Nature">
        <title>The complete genome sequence of the gastric pathogen Helicobacter pylori.</title>
        <authorList>
            <person name="Tomb J.-F."/>
            <person name="White O."/>
            <person name="Kerlavage A.R."/>
            <person name="Clayton R.A."/>
            <person name="Sutton G.G."/>
            <person name="Fleischmann R.D."/>
            <person name="Ketchum K.A."/>
            <person name="Klenk H.-P."/>
            <person name="Gill S.R."/>
            <person name="Dougherty B.A."/>
            <person name="Nelson K.E."/>
            <person name="Quackenbush J."/>
            <person name="Zhou L."/>
            <person name="Kirkness E.F."/>
            <person name="Peterson S.N."/>
            <person name="Loftus B.J."/>
            <person name="Richardson D.L."/>
            <person name="Dodson R.J."/>
            <person name="Khalak H.G."/>
            <person name="Glodek A."/>
            <person name="McKenney K."/>
            <person name="FitzGerald L.M."/>
            <person name="Lee N."/>
            <person name="Adams M.D."/>
            <person name="Hickey E.K."/>
            <person name="Berg D.E."/>
            <person name="Gocayne J.D."/>
            <person name="Utterback T.R."/>
            <person name="Peterson J.D."/>
            <person name="Kelley J.M."/>
            <person name="Cotton M.D."/>
            <person name="Weidman J.F."/>
            <person name="Fujii C."/>
            <person name="Bowman C."/>
            <person name="Watthey L."/>
            <person name="Wallin E."/>
            <person name="Hayes W.S."/>
            <person name="Borodovsky M."/>
            <person name="Karp P.D."/>
            <person name="Smith H.O."/>
            <person name="Fraser C.M."/>
            <person name="Venter J.C."/>
        </authorList>
    </citation>
    <scope>NUCLEOTIDE SEQUENCE [LARGE SCALE GENOMIC DNA]</scope>
    <source>
        <strain>ATCC 700392 / 26695</strain>
    </source>
</reference>
<name>TRHP_HELPY</name>
<accession>P56113</accession>
<dbReference type="EC" id="3.4.-.-" evidence="3"/>
<dbReference type="EMBL" id="AE000511">
    <property type="protein sequence ID" value="AAD07235.1"/>
    <property type="molecule type" value="Genomic_DNA"/>
</dbReference>
<dbReference type="PIR" id="A64541">
    <property type="entry name" value="A64541"/>
</dbReference>
<dbReference type="RefSeq" id="NP_206968.1">
    <property type="nucleotide sequence ID" value="NC_000915.1"/>
</dbReference>
<dbReference type="RefSeq" id="WP_001077422.1">
    <property type="nucleotide sequence ID" value="NC_018939.1"/>
</dbReference>
<dbReference type="FunCoup" id="P56113">
    <property type="interactions" value="111"/>
</dbReference>
<dbReference type="STRING" id="85962.HP_0169"/>
<dbReference type="MEROPS" id="U32.002"/>
<dbReference type="PaxDb" id="85962-C694_00835"/>
<dbReference type="EnsemblBacteria" id="AAD07235">
    <property type="protein sequence ID" value="AAD07235"/>
    <property type="gene ID" value="HP_0169"/>
</dbReference>
<dbReference type="KEGG" id="heo:C694_00835"/>
<dbReference type="KEGG" id="hpy:HP_0169"/>
<dbReference type="PATRIC" id="fig|85962.47.peg.182"/>
<dbReference type="eggNOG" id="COG0826">
    <property type="taxonomic scope" value="Bacteria"/>
</dbReference>
<dbReference type="InParanoid" id="P56113"/>
<dbReference type="OrthoDB" id="9807498at2"/>
<dbReference type="PhylomeDB" id="P56113"/>
<dbReference type="PHI-base" id="PHI:6964"/>
<dbReference type="Proteomes" id="UP000000429">
    <property type="component" value="Chromosome"/>
</dbReference>
<dbReference type="GO" id="GO:0008233">
    <property type="term" value="F:peptidase activity"/>
    <property type="evidence" value="ECO:0007669"/>
    <property type="project" value="UniProtKB-KW"/>
</dbReference>
<dbReference type="GO" id="GO:0006508">
    <property type="term" value="P:proteolysis"/>
    <property type="evidence" value="ECO:0007669"/>
    <property type="project" value="UniProtKB-KW"/>
</dbReference>
<dbReference type="GO" id="GO:0008033">
    <property type="term" value="P:tRNA processing"/>
    <property type="evidence" value="ECO:0007669"/>
    <property type="project" value="UniProtKB-KW"/>
</dbReference>
<dbReference type="InterPro" id="IPR001539">
    <property type="entry name" value="Peptidase_U32"/>
</dbReference>
<dbReference type="InterPro" id="IPR051454">
    <property type="entry name" value="RNA/ubiquinone_mod_enzymes"/>
</dbReference>
<dbReference type="PANTHER" id="PTHR30217">
    <property type="entry name" value="PEPTIDASE U32 FAMILY"/>
    <property type="match status" value="1"/>
</dbReference>
<dbReference type="PANTHER" id="PTHR30217:SF6">
    <property type="entry name" value="TRNA HYDROXYLATION PROTEIN P"/>
    <property type="match status" value="1"/>
</dbReference>
<dbReference type="Pfam" id="PF01136">
    <property type="entry name" value="Peptidase_U32"/>
    <property type="match status" value="1"/>
</dbReference>
<dbReference type="PROSITE" id="PS01276">
    <property type="entry name" value="PEPTIDASE_U32"/>
    <property type="match status" value="1"/>
</dbReference>
<feature type="signal peptide" evidence="2">
    <location>
        <begin position="1"/>
        <end position="58"/>
    </location>
</feature>
<feature type="chain" id="PRO_0000028526" description="tRNA hydroxylation protein P">
    <location>
        <begin position="59"/>
        <end position="422"/>
    </location>
</feature>
<sequence length="422" mass="47275">MNQVELLSPAGNLKKLKIALNYGADAVYGGVSHFSLRNRAGKEFTLETFKEGIDYAHALNKKVYATINGFPFNSQLKLLEEHIDKMAELEPDAFIIAAPGVVKLALKIAPHIPIHLSTQANVLNLLDAQVFYDLGVKRIVCARELSLNDAIEIKKALPNLELEIFVHGSMCFAFSGRCLISALQKGRVPNRGSCANDCRFDYEYYVKNPDNGVMMRLVEEEGVGTHIFNAKDLNLSGHIAEILSSNAISALKIEGRTKSSYYAAQTTRIYRLAVDDFYHNTLKPSFYASELNTLKNRGFTDGYLMRRPFERLDTQNHQTAISEGDFQVNGEITEDGRFFACKFTTTTNTAYEIIAPKNAAITPIVNEIGKIYTFEKRSYLVLYKILLENNTELETIHSGNVNLVRLPAPLPAFSFLRTQVRV</sequence>
<comment type="function">
    <text evidence="1">Involved in prephenate-dependent formation of 5-hydroxyuridine (ho5U) modification at position 34 in tRNAs, the first step in 5-carboxymethoxyuridine (cmo5U) biosynthesis.</text>
</comment>
<comment type="similarity">
    <text evidence="3">Belongs to the peptidase U32 family.</text>
</comment>
<organism>
    <name type="scientific">Helicobacter pylori (strain ATCC 700392 / 26695)</name>
    <name type="common">Campylobacter pylori</name>
    <dbReference type="NCBI Taxonomy" id="85962"/>
    <lineage>
        <taxon>Bacteria</taxon>
        <taxon>Pseudomonadati</taxon>
        <taxon>Campylobacterota</taxon>
        <taxon>Epsilonproteobacteria</taxon>
        <taxon>Campylobacterales</taxon>
        <taxon>Helicobacteraceae</taxon>
        <taxon>Helicobacter</taxon>
    </lineage>
</organism>
<gene>
    <name evidence="1" type="primary">trhP</name>
    <name type="ordered locus">HP_0169</name>
</gene>